<dbReference type="EC" id="2.7.7.4" evidence="1"/>
<dbReference type="EMBL" id="CP000133">
    <property type="protein sequence ID" value="ABC89938.1"/>
    <property type="molecule type" value="Genomic_DNA"/>
</dbReference>
<dbReference type="RefSeq" id="WP_011424472.1">
    <property type="nucleotide sequence ID" value="NC_007761.1"/>
</dbReference>
<dbReference type="SMR" id="Q2KB48"/>
<dbReference type="KEGG" id="ret:RHE_CH01131"/>
<dbReference type="eggNOG" id="COG0175">
    <property type="taxonomic scope" value="Bacteria"/>
</dbReference>
<dbReference type="HOGENOM" id="CLU_043026_0_0_5"/>
<dbReference type="OrthoDB" id="9772604at2"/>
<dbReference type="UniPathway" id="UPA00140">
    <property type="reaction ID" value="UER00204"/>
</dbReference>
<dbReference type="Proteomes" id="UP000001936">
    <property type="component" value="Chromosome"/>
</dbReference>
<dbReference type="GO" id="GO:0005524">
    <property type="term" value="F:ATP binding"/>
    <property type="evidence" value="ECO:0007669"/>
    <property type="project" value="UniProtKB-KW"/>
</dbReference>
<dbReference type="GO" id="GO:0004781">
    <property type="term" value="F:sulfate adenylyltransferase (ATP) activity"/>
    <property type="evidence" value="ECO:0007669"/>
    <property type="project" value="UniProtKB-UniRule"/>
</dbReference>
<dbReference type="GO" id="GO:0070814">
    <property type="term" value="P:hydrogen sulfide biosynthetic process"/>
    <property type="evidence" value="ECO:0007669"/>
    <property type="project" value="UniProtKB-UniRule"/>
</dbReference>
<dbReference type="GO" id="GO:0000103">
    <property type="term" value="P:sulfate assimilation"/>
    <property type="evidence" value="ECO:0007669"/>
    <property type="project" value="UniProtKB-UniRule"/>
</dbReference>
<dbReference type="FunFam" id="3.40.50.620:FF:000002">
    <property type="entry name" value="Sulfate adenylyltransferase subunit 2"/>
    <property type="match status" value="1"/>
</dbReference>
<dbReference type="Gene3D" id="3.40.50.620">
    <property type="entry name" value="HUPs"/>
    <property type="match status" value="1"/>
</dbReference>
<dbReference type="HAMAP" id="MF_00064">
    <property type="entry name" value="Sulf_adenylyltr_sub2"/>
    <property type="match status" value="1"/>
</dbReference>
<dbReference type="InterPro" id="IPR002500">
    <property type="entry name" value="PAPS_reduct_dom"/>
</dbReference>
<dbReference type="InterPro" id="IPR014729">
    <property type="entry name" value="Rossmann-like_a/b/a_fold"/>
</dbReference>
<dbReference type="InterPro" id="IPR011784">
    <property type="entry name" value="SO4_adenylTrfase_ssu"/>
</dbReference>
<dbReference type="InterPro" id="IPR050128">
    <property type="entry name" value="Sulfate_adenylyltrnsfr_sub2"/>
</dbReference>
<dbReference type="NCBIfam" id="TIGR02039">
    <property type="entry name" value="CysD"/>
    <property type="match status" value="1"/>
</dbReference>
<dbReference type="NCBIfam" id="NF003587">
    <property type="entry name" value="PRK05253.1"/>
    <property type="match status" value="1"/>
</dbReference>
<dbReference type="NCBIfam" id="NF009214">
    <property type="entry name" value="PRK12563.1"/>
    <property type="match status" value="1"/>
</dbReference>
<dbReference type="PANTHER" id="PTHR43196">
    <property type="entry name" value="SULFATE ADENYLYLTRANSFERASE SUBUNIT 2"/>
    <property type="match status" value="1"/>
</dbReference>
<dbReference type="PANTHER" id="PTHR43196:SF1">
    <property type="entry name" value="SULFATE ADENYLYLTRANSFERASE SUBUNIT 2"/>
    <property type="match status" value="1"/>
</dbReference>
<dbReference type="Pfam" id="PF01507">
    <property type="entry name" value="PAPS_reduct"/>
    <property type="match status" value="1"/>
</dbReference>
<dbReference type="PIRSF" id="PIRSF002936">
    <property type="entry name" value="CysDAde_trans"/>
    <property type="match status" value="1"/>
</dbReference>
<dbReference type="SUPFAM" id="SSF52402">
    <property type="entry name" value="Adenine nucleotide alpha hydrolases-like"/>
    <property type="match status" value="1"/>
</dbReference>
<sequence>MPDSRPDTELSNPQSAKAPLDPHLKALENESIHIFREVAAEFERPVMLYSIGKDSSVLLHLARKAFYPGRVPFPLLHVNTGWKFREMIAFRDETARKYDLDLIEHINPRGAAENITPFTHGSAAFTDIMKTESLRQALDAGQFDAAFGGARRDEEASRAKERIYSFRTPDHRWDPRNQRPELWNIYNGMIRKGESVRAFPLSNWTEVDIWRYIQAEDIPLVPLYYAKKRKFVERDGMMILAEDPRLELLPGEVRQEGMIRFRTLGDFPLTGAIRSQATTLEEVIAELEIATVSERQGRAIDRDQSGSMEKKKREGYF</sequence>
<gene>
    <name evidence="1" type="primary">cysD</name>
    <name type="ordered locus">RHE_CH01131</name>
</gene>
<name>CYSD_RHIEC</name>
<proteinExistence type="inferred from homology"/>
<keyword id="KW-0067">ATP-binding</keyword>
<keyword id="KW-0547">Nucleotide-binding</keyword>
<keyword id="KW-0548">Nucleotidyltransferase</keyword>
<keyword id="KW-1185">Reference proteome</keyword>
<keyword id="KW-0808">Transferase</keyword>
<evidence type="ECO:0000255" key="1">
    <source>
        <dbReference type="HAMAP-Rule" id="MF_00064"/>
    </source>
</evidence>
<evidence type="ECO:0000256" key="2">
    <source>
        <dbReference type="SAM" id="MobiDB-lite"/>
    </source>
</evidence>
<protein>
    <recommendedName>
        <fullName evidence="1">Sulfate adenylyltransferase subunit 2</fullName>
        <ecNumber evidence="1">2.7.7.4</ecNumber>
    </recommendedName>
    <alternativeName>
        <fullName evidence="1">ATP-sulfurylase small subunit</fullName>
    </alternativeName>
    <alternativeName>
        <fullName evidence="1">Sulfate adenylate transferase</fullName>
        <shortName evidence="1">SAT</shortName>
    </alternativeName>
</protein>
<comment type="function">
    <text evidence="1">With CysN forms the ATP sulfurylase (ATPS) that catalyzes the adenylation of sulfate producing adenosine 5'-phosphosulfate (APS) and diphosphate, the first enzymatic step in sulfur assimilation pathway. APS synthesis involves the formation of a high-energy phosphoric-sulfuric acid anhydride bond driven by GTP hydrolysis by CysN coupled to ATP hydrolysis by CysD.</text>
</comment>
<comment type="catalytic activity">
    <reaction evidence="1">
        <text>sulfate + ATP + H(+) = adenosine 5'-phosphosulfate + diphosphate</text>
        <dbReference type="Rhea" id="RHEA:18133"/>
        <dbReference type="ChEBI" id="CHEBI:15378"/>
        <dbReference type="ChEBI" id="CHEBI:16189"/>
        <dbReference type="ChEBI" id="CHEBI:30616"/>
        <dbReference type="ChEBI" id="CHEBI:33019"/>
        <dbReference type="ChEBI" id="CHEBI:58243"/>
        <dbReference type="EC" id="2.7.7.4"/>
    </reaction>
</comment>
<comment type="pathway">
    <text evidence="1">Sulfur metabolism; hydrogen sulfide biosynthesis; sulfite from sulfate: step 1/3.</text>
</comment>
<comment type="subunit">
    <text evidence="1">Heterodimer composed of CysD, the smaller subunit, and CysN.</text>
</comment>
<comment type="similarity">
    <text evidence="1">Belongs to the PAPS reductase family. CysD subfamily.</text>
</comment>
<feature type="chain" id="PRO_1000008976" description="Sulfate adenylyltransferase subunit 2">
    <location>
        <begin position="1"/>
        <end position="317"/>
    </location>
</feature>
<feature type="region of interest" description="Disordered" evidence="2">
    <location>
        <begin position="1"/>
        <end position="21"/>
    </location>
</feature>
<feature type="region of interest" description="Disordered" evidence="2">
    <location>
        <begin position="298"/>
        <end position="317"/>
    </location>
</feature>
<accession>Q2KB48</accession>
<reference key="1">
    <citation type="journal article" date="2006" name="Proc. Natl. Acad. Sci. U.S.A.">
        <title>The partitioned Rhizobium etli genome: genetic and metabolic redundancy in seven interacting replicons.</title>
        <authorList>
            <person name="Gonzalez V."/>
            <person name="Santamaria R.I."/>
            <person name="Bustos P."/>
            <person name="Hernandez-Gonzalez I."/>
            <person name="Medrano-Soto A."/>
            <person name="Moreno-Hagelsieb G."/>
            <person name="Janga S.C."/>
            <person name="Ramirez M.A."/>
            <person name="Jimenez-Jacinto V."/>
            <person name="Collado-Vides J."/>
            <person name="Davila G."/>
        </authorList>
    </citation>
    <scope>NUCLEOTIDE SEQUENCE [LARGE SCALE GENOMIC DNA]</scope>
    <source>
        <strain>ATCC 51251 / DSM 11541 / JCM 21823 / NBRC 15573 / CFN 42</strain>
    </source>
</reference>
<organism>
    <name type="scientific">Rhizobium etli (strain ATCC 51251 / DSM 11541 / JCM 21823 / NBRC 15573 / CFN 42)</name>
    <dbReference type="NCBI Taxonomy" id="347834"/>
    <lineage>
        <taxon>Bacteria</taxon>
        <taxon>Pseudomonadati</taxon>
        <taxon>Pseudomonadota</taxon>
        <taxon>Alphaproteobacteria</taxon>
        <taxon>Hyphomicrobiales</taxon>
        <taxon>Rhizobiaceae</taxon>
        <taxon>Rhizobium/Agrobacterium group</taxon>
        <taxon>Rhizobium</taxon>
    </lineage>
</organism>